<name>IOLA1_BACAH</name>
<evidence type="ECO:0000255" key="1">
    <source>
        <dbReference type="HAMAP-Rule" id="MF_01670"/>
    </source>
</evidence>
<protein>
    <recommendedName>
        <fullName evidence="1">Malonate-semialdehyde dehydrogenase 1</fullName>
        <shortName evidence="1">MSA dehydrogenase 1</shortName>
        <ecNumber evidence="1">1.2.1.27</ecNumber>
    </recommendedName>
    <alternativeName>
        <fullName evidence="1">Methylmalonate-semialdehyde dehydrogenase 1</fullName>
        <shortName evidence="1">MMSA dehydrogenase 1</shortName>
        <shortName evidence="1">MSDH 1</shortName>
    </alternativeName>
</protein>
<gene>
    <name evidence="1" type="primary">iolA1</name>
    <name type="ordered locus">BALH_2098</name>
</gene>
<accession>A0RDW1</accession>
<organism>
    <name type="scientific">Bacillus thuringiensis (strain Al Hakam)</name>
    <dbReference type="NCBI Taxonomy" id="412694"/>
    <lineage>
        <taxon>Bacteria</taxon>
        <taxon>Bacillati</taxon>
        <taxon>Bacillota</taxon>
        <taxon>Bacilli</taxon>
        <taxon>Bacillales</taxon>
        <taxon>Bacillaceae</taxon>
        <taxon>Bacillus</taxon>
        <taxon>Bacillus cereus group</taxon>
    </lineage>
</organism>
<reference key="1">
    <citation type="journal article" date="2007" name="J. Bacteriol.">
        <title>The complete genome sequence of Bacillus thuringiensis Al Hakam.</title>
        <authorList>
            <person name="Challacombe J.F."/>
            <person name="Altherr M.R."/>
            <person name="Xie G."/>
            <person name="Bhotika S.S."/>
            <person name="Brown N."/>
            <person name="Bruce D."/>
            <person name="Campbell C.S."/>
            <person name="Campbell M.L."/>
            <person name="Chen J."/>
            <person name="Chertkov O."/>
            <person name="Cleland C."/>
            <person name="Dimitrijevic M."/>
            <person name="Doggett N.A."/>
            <person name="Fawcett J.J."/>
            <person name="Glavina T."/>
            <person name="Goodwin L.A."/>
            <person name="Green L.D."/>
            <person name="Han C.S."/>
            <person name="Hill K.K."/>
            <person name="Hitchcock P."/>
            <person name="Jackson P.J."/>
            <person name="Keim P."/>
            <person name="Kewalramani A.R."/>
            <person name="Longmire J."/>
            <person name="Lucas S."/>
            <person name="Malfatti S."/>
            <person name="Martinez D."/>
            <person name="McMurry K."/>
            <person name="Meincke L.J."/>
            <person name="Misra M."/>
            <person name="Moseman B.L."/>
            <person name="Mundt M."/>
            <person name="Munk A.C."/>
            <person name="Okinaka R.T."/>
            <person name="Parson-Quintana B."/>
            <person name="Reilly L.P."/>
            <person name="Richardson P."/>
            <person name="Robinson D.L."/>
            <person name="Saunders E."/>
            <person name="Tapia R."/>
            <person name="Tesmer J.G."/>
            <person name="Thayer N."/>
            <person name="Thompson L.S."/>
            <person name="Tice H."/>
            <person name="Ticknor L.O."/>
            <person name="Wills P.L."/>
            <person name="Gilna P."/>
            <person name="Brettin T.S."/>
        </authorList>
    </citation>
    <scope>NUCLEOTIDE SEQUENCE [LARGE SCALE GENOMIC DNA]</scope>
    <source>
        <strain>Al Hakam</strain>
    </source>
</reference>
<keyword id="KW-0520">NAD</keyword>
<keyword id="KW-0560">Oxidoreductase</keyword>
<feature type="chain" id="PRO_0000352333" description="Malonate-semialdehyde dehydrogenase 1">
    <location>
        <begin position="1"/>
        <end position="486"/>
    </location>
</feature>
<feature type="active site" description="Nucleophile" evidence="1">
    <location>
        <position position="286"/>
    </location>
</feature>
<feature type="binding site" evidence="1">
    <location>
        <position position="154"/>
    </location>
    <ligand>
        <name>NAD(+)</name>
        <dbReference type="ChEBI" id="CHEBI:57540"/>
    </ligand>
</feature>
<feature type="binding site" evidence="1">
    <location>
        <position position="178"/>
    </location>
    <ligand>
        <name>NAD(+)</name>
        <dbReference type="ChEBI" id="CHEBI:57540"/>
    </ligand>
</feature>
<feature type="binding site" evidence="1">
    <location>
        <position position="181"/>
    </location>
    <ligand>
        <name>NAD(+)</name>
        <dbReference type="ChEBI" id="CHEBI:57540"/>
    </ligand>
</feature>
<feature type="binding site" evidence="1">
    <location>
        <position position="182"/>
    </location>
    <ligand>
        <name>NAD(+)</name>
        <dbReference type="ChEBI" id="CHEBI:57540"/>
    </ligand>
</feature>
<feature type="binding site" evidence="1">
    <location>
        <position position="231"/>
    </location>
    <ligand>
        <name>NAD(+)</name>
        <dbReference type="ChEBI" id="CHEBI:57540"/>
    </ligand>
</feature>
<feature type="binding site" evidence="1">
    <location>
        <position position="386"/>
    </location>
    <ligand>
        <name>NAD(+)</name>
        <dbReference type="ChEBI" id="CHEBI:57540"/>
    </ligand>
</feature>
<dbReference type="EC" id="1.2.1.27" evidence="1"/>
<dbReference type="EMBL" id="CP000485">
    <property type="protein sequence ID" value="ABK85404.1"/>
    <property type="molecule type" value="Genomic_DNA"/>
</dbReference>
<dbReference type="RefSeq" id="WP_000633357.1">
    <property type="nucleotide sequence ID" value="NC_008600.1"/>
</dbReference>
<dbReference type="SMR" id="A0RDW1"/>
<dbReference type="KEGG" id="btl:BALH_2098"/>
<dbReference type="HOGENOM" id="CLU_005391_1_10_9"/>
<dbReference type="UniPathway" id="UPA00076">
    <property type="reaction ID" value="UER00148"/>
</dbReference>
<dbReference type="GO" id="GO:0018478">
    <property type="term" value="F:malonate-semialdehyde dehydrogenase (acetylating) activity"/>
    <property type="evidence" value="ECO:0007669"/>
    <property type="project" value="UniProtKB-UniRule"/>
</dbReference>
<dbReference type="GO" id="GO:0004491">
    <property type="term" value="F:methylmalonate-semialdehyde dehydrogenase (acylating, NAD) activity"/>
    <property type="evidence" value="ECO:0007669"/>
    <property type="project" value="UniProtKB-UniRule"/>
</dbReference>
<dbReference type="GO" id="GO:0019310">
    <property type="term" value="P:inositol catabolic process"/>
    <property type="evidence" value="ECO:0007669"/>
    <property type="project" value="UniProtKB-UniRule"/>
</dbReference>
<dbReference type="GO" id="GO:0006210">
    <property type="term" value="P:thymine catabolic process"/>
    <property type="evidence" value="ECO:0007669"/>
    <property type="project" value="TreeGrafter"/>
</dbReference>
<dbReference type="GO" id="GO:0006574">
    <property type="term" value="P:valine catabolic process"/>
    <property type="evidence" value="ECO:0007669"/>
    <property type="project" value="TreeGrafter"/>
</dbReference>
<dbReference type="CDD" id="cd07085">
    <property type="entry name" value="ALDH_F6_MMSDH"/>
    <property type="match status" value="1"/>
</dbReference>
<dbReference type="FunFam" id="3.40.309.10:FF:000002">
    <property type="entry name" value="Methylmalonate-semialdehyde dehydrogenase (Acylating)"/>
    <property type="match status" value="1"/>
</dbReference>
<dbReference type="FunFam" id="3.40.605.10:FF:000003">
    <property type="entry name" value="Methylmalonate-semialdehyde dehydrogenase [acylating]"/>
    <property type="match status" value="1"/>
</dbReference>
<dbReference type="Gene3D" id="3.40.605.10">
    <property type="entry name" value="Aldehyde Dehydrogenase, Chain A, domain 1"/>
    <property type="match status" value="1"/>
</dbReference>
<dbReference type="Gene3D" id="3.40.309.10">
    <property type="entry name" value="Aldehyde Dehydrogenase, Chain A, domain 2"/>
    <property type="match status" value="1"/>
</dbReference>
<dbReference type="HAMAP" id="MF_01670">
    <property type="entry name" value="IolA"/>
    <property type="match status" value="1"/>
</dbReference>
<dbReference type="InterPro" id="IPR016161">
    <property type="entry name" value="Ald_DH/histidinol_DH"/>
</dbReference>
<dbReference type="InterPro" id="IPR016163">
    <property type="entry name" value="Ald_DH_C"/>
</dbReference>
<dbReference type="InterPro" id="IPR016160">
    <property type="entry name" value="Ald_DH_CS_CYS"/>
</dbReference>
<dbReference type="InterPro" id="IPR016162">
    <property type="entry name" value="Ald_DH_N"/>
</dbReference>
<dbReference type="InterPro" id="IPR015590">
    <property type="entry name" value="Aldehyde_DH_dom"/>
</dbReference>
<dbReference type="InterPro" id="IPR010061">
    <property type="entry name" value="MeMal-semiAld_DH"/>
</dbReference>
<dbReference type="InterPro" id="IPR023510">
    <property type="entry name" value="MSDH_GmP_bac"/>
</dbReference>
<dbReference type="NCBIfam" id="TIGR01722">
    <property type="entry name" value="MMSDH"/>
    <property type="match status" value="1"/>
</dbReference>
<dbReference type="PANTHER" id="PTHR43866">
    <property type="entry name" value="MALONATE-SEMIALDEHYDE DEHYDROGENASE"/>
    <property type="match status" value="1"/>
</dbReference>
<dbReference type="PANTHER" id="PTHR43866:SF4">
    <property type="entry name" value="MALONATE-SEMIALDEHYDE DEHYDROGENASE"/>
    <property type="match status" value="1"/>
</dbReference>
<dbReference type="Pfam" id="PF00171">
    <property type="entry name" value="Aldedh"/>
    <property type="match status" value="1"/>
</dbReference>
<dbReference type="SUPFAM" id="SSF53720">
    <property type="entry name" value="ALDH-like"/>
    <property type="match status" value="1"/>
</dbReference>
<dbReference type="PROSITE" id="PS00070">
    <property type="entry name" value="ALDEHYDE_DEHYDR_CYS"/>
    <property type="match status" value="1"/>
</dbReference>
<sequence>MITTEIKRVKNHINGEWVESTGTEVEAVPNPATGKIIAYVPLSPKEDVEKAVEAAKAAYETWSKVPVPNRSRQLYKYLQLLQENKEELAKIITLENGKTLTDATGEVQRGIEAVELATSTPNLMMGQALPNIASGIDGSIWRYPIGVVAGITPFNFPMMIPLWMFPLAIACGNTFVLKTSERTPLLAERLVELFYEAGFPKGVLNLVQGGKDVVNSILENKDIQAVSFVGSEPVARYVYETGTKHGKRVQALAGAKNHAIVMPDCNLEKTVQGVIGSAFASSGERCMACSVVAVVDEIADEFIDVLVAETKKLKVGDGFHEDNYVGPLIRESHKERVLGYINSGVADGATLLVDGRKIKEEVGEGYFVGATIFDGVNQEMKIWQDEIFAPVLSIVRVKDLEEGIKLTNQSKFANGAVIYTSNGKHAQTFRDNIDAGMIGVNVNVPAPMAFFAFAGNKASFFGDLGTNGTDGVQFYTRKKVVTERWF</sequence>
<proteinExistence type="inferred from homology"/>
<comment type="function">
    <text evidence="1">Catalyzes the oxidation of malonate semialdehyde (MSA) and methylmalonate semialdehyde (MMSA) into acetyl-CoA and propanoyl-CoA, respectively. Is involved in a myo-inositol catabolic pathway. Bicarbonate, and not CO2, is the end-product of the enzymatic reaction.</text>
</comment>
<comment type="catalytic activity">
    <reaction evidence="1">
        <text>3-oxopropanoate + NAD(+) + CoA + H2O = hydrogencarbonate + acetyl-CoA + NADH + H(+)</text>
        <dbReference type="Rhea" id="RHEA:76615"/>
        <dbReference type="ChEBI" id="CHEBI:15377"/>
        <dbReference type="ChEBI" id="CHEBI:15378"/>
        <dbReference type="ChEBI" id="CHEBI:17544"/>
        <dbReference type="ChEBI" id="CHEBI:33190"/>
        <dbReference type="ChEBI" id="CHEBI:57287"/>
        <dbReference type="ChEBI" id="CHEBI:57288"/>
        <dbReference type="ChEBI" id="CHEBI:57540"/>
        <dbReference type="ChEBI" id="CHEBI:57945"/>
        <dbReference type="EC" id="1.2.1.27"/>
    </reaction>
    <physiologicalReaction direction="left-to-right" evidence="1">
        <dbReference type="Rhea" id="RHEA:76616"/>
    </physiologicalReaction>
</comment>
<comment type="catalytic activity">
    <reaction evidence="1">
        <text>2-methyl-3-oxopropanoate + NAD(+) + CoA + H2O = propanoyl-CoA + hydrogencarbonate + NADH + H(+)</text>
        <dbReference type="Rhea" id="RHEA:20804"/>
        <dbReference type="ChEBI" id="CHEBI:15377"/>
        <dbReference type="ChEBI" id="CHEBI:15378"/>
        <dbReference type="ChEBI" id="CHEBI:17544"/>
        <dbReference type="ChEBI" id="CHEBI:57287"/>
        <dbReference type="ChEBI" id="CHEBI:57392"/>
        <dbReference type="ChEBI" id="CHEBI:57540"/>
        <dbReference type="ChEBI" id="CHEBI:57700"/>
        <dbReference type="ChEBI" id="CHEBI:57945"/>
        <dbReference type="EC" id="1.2.1.27"/>
    </reaction>
    <physiologicalReaction direction="left-to-right" evidence="1">
        <dbReference type="Rhea" id="RHEA:20805"/>
    </physiologicalReaction>
</comment>
<comment type="pathway">
    <text evidence="1">Polyol metabolism; myo-inositol degradation into acetyl-CoA; acetyl-CoA from myo-inositol: step 7/7.</text>
</comment>
<comment type="subunit">
    <text evidence="1">Homotetramer.</text>
</comment>
<comment type="similarity">
    <text evidence="1">Belongs to the aldehyde dehydrogenase family. IolA subfamily.</text>
</comment>